<gene>
    <name type="primary">SHANK2-AS3</name>
    <name type="synonym">C11orf76</name>
</gene>
<accession>Q9BTD1</accession>
<dbReference type="EMBL" id="BC004224">
    <property type="protein sequence ID" value="AAH04224.1"/>
    <property type="status" value="ALT_INIT"/>
    <property type="molecule type" value="mRNA"/>
</dbReference>
<dbReference type="BioMuta" id="HGNC:25098"/>
<dbReference type="AGR" id="HGNC:25098"/>
<dbReference type="GeneCards" id="SHANK2-AS3"/>
<dbReference type="HGNC" id="HGNC:25098">
    <property type="gene designation" value="SHANK2-AS3"/>
</dbReference>
<dbReference type="neXtProt" id="NX_Q9BTD1"/>
<dbReference type="InParanoid" id="Q9BTD1"/>
<dbReference type="PAN-GO" id="Q9BTD1">
    <property type="GO annotations" value="0 GO annotations based on evolutionary models"/>
</dbReference>
<dbReference type="Pharos" id="Q9BTD1">
    <property type="development level" value="Tdark"/>
</dbReference>
<dbReference type="Proteomes" id="UP000005640">
    <property type="component" value="Unplaced"/>
</dbReference>
<dbReference type="RNAct" id="Q9BTD1">
    <property type="molecule type" value="protein"/>
</dbReference>
<reference key="1">
    <citation type="journal article" date="2004" name="Genome Res.">
        <title>The status, quality, and expansion of the NIH full-length cDNA project: the Mammalian Gene Collection (MGC).</title>
        <authorList>
            <consortium name="The MGC Project Team"/>
        </authorList>
    </citation>
    <scope>NUCLEOTIDE SEQUENCE [LARGE SCALE MRNA]</scope>
    <source>
        <tissue>Lung</tissue>
    </source>
</reference>
<organism>
    <name type="scientific">Homo sapiens</name>
    <name type="common">Human</name>
    <dbReference type="NCBI Taxonomy" id="9606"/>
    <lineage>
        <taxon>Eukaryota</taxon>
        <taxon>Metazoa</taxon>
        <taxon>Chordata</taxon>
        <taxon>Craniata</taxon>
        <taxon>Vertebrata</taxon>
        <taxon>Euteleostomi</taxon>
        <taxon>Mammalia</taxon>
        <taxon>Eutheria</taxon>
        <taxon>Euarchontoglires</taxon>
        <taxon>Primates</taxon>
        <taxon>Haplorrhini</taxon>
        <taxon>Catarrhini</taxon>
        <taxon>Hominidae</taxon>
        <taxon>Homo</taxon>
    </lineage>
</organism>
<evidence type="ECO:0000305" key="1"/>
<name>SHAS3_HUMAN</name>
<feature type="chain" id="PRO_0000263096" description="Putative uncharacterized protein SHANK2-AS3">
    <location>
        <begin position="1"/>
        <end position="123"/>
    </location>
</feature>
<sequence length="123" mass="13317">MAQLPSAQMPAPRTQPDLILVHPVLALSGRAPSILCSVPWDACELLATAMWWKTRILWGVFLISRTRPPAPMQILILTLDPSEGEVCCKKRKPGQTGRNRVRMTTATCKPGGEASGETSPGTP</sequence>
<comment type="caution">
    <text evidence="1">Product of a dubious CDS prediction.</text>
</comment>
<comment type="sequence caution" evidence="1">
    <conflict type="erroneous initiation">
        <sequence resource="EMBL-CDS" id="AAH04224"/>
    </conflict>
    <text>Truncated N-terminus.</text>
</comment>
<keyword id="KW-1185">Reference proteome</keyword>
<proteinExistence type="uncertain"/>
<protein>
    <recommendedName>
        <fullName>Putative uncharacterized protein SHANK2-AS3</fullName>
    </recommendedName>
</protein>